<protein>
    <recommendedName>
        <fullName evidence="1">G/U mismatch-specific DNA glycosylase</fullName>
        <ecNumber evidence="1">3.2.2.28</ecNumber>
    </recommendedName>
    <alternativeName>
        <fullName evidence="1">Double-strand-specific uracil glycosylase</fullName>
    </alternativeName>
    <alternativeName>
        <fullName evidence="1">Mismatch-specific uracil DNA-glycosylase</fullName>
        <shortName evidence="1">MUG</shortName>
    </alternativeName>
</protein>
<feature type="chain" id="PRO_1000188950" description="G/U mismatch-specific DNA glycosylase">
    <location>
        <begin position="1"/>
        <end position="168"/>
    </location>
</feature>
<reference key="1">
    <citation type="journal article" date="2009" name="PLoS Genet.">
        <title>Organised genome dynamics in the Escherichia coli species results in highly diverse adaptive paths.</title>
        <authorList>
            <person name="Touchon M."/>
            <person name="Hoede C."/>
            <person name="Tenaillon O."/>
            <person name="Barbe V."/>
            <person name="Baeriswyl S."/>
            <person name="Bidet P."/>
            <person name="Bingen E."/>
            <person name="Bonacorsi S."/>
            <person name="Bouchier C."/>
            <person name="Bouvet O."/>
            <person name="Calteau A."/>
            <person name="Chiapello H."/>
            <person name="Clermont O."/>
            <person name="Cruveiller S."/>
            <person name="Danchin A."/>
            <person name="Diard M."/>
            <person name="Dossat C."/>
            <person name="Karoui M.E."/>
            <person name="Frapy E."/>
            <person name="Garry L."/>
            <person name="Ghigo J.M."/>
            <person name="Gilles A.M."/>
            <person name="Johnson J."/>
            <person name="Le Bouguenec C."/>
            <person name="Lescat M."/>
            <person name="Mangenot S."/>
            <person name="Martinez-Jehanne V."/>
            <person name="Matic I."/>
            <person name="Nassif X."/>
            <person name="Oztas S."/>
            <person name="Petit M.A."/>
            <person name="Pichon C."/>
            <person name="Rouy Z."/>
            <person name="Ruf C.S."/>
            <person name="Schneider D."/>
            <person name="Tourret J."/>
            <person name="Vacherie B."/>
            <person name="Vallenet D."/>
            <person name="Medigue C."/>
            <person name="Rocha E.P.C."/>
            <person name="Denamur E."/>
        </authorList>
    </citation>
    <scope>NUCLEOTIDE SEQUENCE [LARGE SCALE GENOMIC DNA]</scope>
    <source>
        <strain>S88 / ExPEC</strain>
    </source>
</reference>
<organism>
    <name type="scientific">Escherichia coli O45:K1 (strain S88 / ExPEC)</name>
    <dbReference type="NCBI Taxonomy" id="585035"/>
    <lineage>
        <taxon>Bacteria</taxon>
        <taxon>Pseudomonadati</taxon>
        <taxon>Pseudomonadota</taxon>
        <taxon>Gammaproteobacteria</taxon>
        <taxon>Enterobacterales</taxon>
        <taxon>Enterobacteriaceae</taxon>
        <taxon>Escherichia</taxon>
    </lineage>
</organism>
<dbReference type="EC" id="3.2.2.28" evidence="1"/>
<dbReference type="EMBL" id="CU928161">
    <property type="protein sequence ID" value="CAR04695.1"/>
    <property type="molecule type" value="Genomic_DNA"/>
</dbReference>
<dbReference type="RefSeq" id="WP_000228937.1">
    <property type="nucleotide sequence ID" value="NC_011742.1"/>
</dbReference>
<dbReference type="SMR" id="B7MB04"/>
<dbReference type="GeneID" id="93778924"/>
<dbReference type="KEGG" id="ecz:ECS88_3466"/>
<dbReference type="HOGENOM" id="CLU_042829_3_1_6"/>
<dbReference type="Proteomes" id="UP000000747">
    <property type="component" value="Chromosome"/>
</dbReference>
<dbReference type="GO" id="GO:0005737">
    <property type="term" value="C:cytoplasm"/>
    <property type="evidence" value="ECO:0007669"/>
    <property type="project" value="UniProtKB-SubCell"/>
</dbReference>
<dbReference type="GO" id="GO:0003677">
    <property type="term" value="F:DNA binding"/>
    <property type="evidence" value="ECO:0007669"/>
    <property type="project" value="UniProtKB-KW"/>
</dbReference>
<dbReference type="GO" id="GO:0008263">
    <property type="term" value="F:pyrimidine-specific mismatch base pair DNA N-glycosylase activity"/>
    <property type="evidence" value="ECO:0007669"/>
    <property type="project" value="UniProtKB-UniRule"/>
</dbReference>
<dbReference type="GO" id="GO:0004844">
    <property type="term" value="F:uracil DNA N-glycosylase activity"/>
    <property type="evidence" value="ECO:0007669"/>
    <property type="project" value="TreeGrafter"/>
</dbReference>
<dbReference type="GO" id="GO:0006285">
    <property type="term" value="P:base-excision repair, AP site formation"/>
    <property type="evidence" value="ECO:0007669"/>
    <property type="project" value="UniProtKB-UniRule"/>
</dbReference>
<dbReference type="CDD" id="cd10028">
    <property type="entry name" value="UDG-F2_TDG_MUG"/>
    <property type="match status" value="1"/>
</dbReference>
<dbReference type="FunFam" id="3.40.470.10:FF:000003">
    <property type="entry name" value="G/U mismatch-specific DNA glycosylase"/>
    <property type="match status" value="1"/>
</dbReference>
<dbReference type="Gene3D" id="3.40.470.10">
    <property type="entry name" value="Uracil-DNA glycosylase-like domain"/>
    <property type="match status" value="1"/>
</dbReference>
<dbReference type="HAMAP" id="MF_01956">
    <property type="entry name" value="MUG"/>
    <property type="match status" value="1"/>
</dbReference>
<dbReference type="InterPro" id="IPR015637">
    <property type="entry name" value="MUG/TDG"/>
</dbReference>
<dbReference type="InterPro" id="IPR023502">
    <property type="entry name" value="MUG_bact"/>
</dbReference>
<dbReference type="InterPro" id="IPR005122">
    <property type="entry name" value="Uracil-DNA_glycosylase-like"/>
</dbReference>
<dbReference type="InterPro" id="IPR036895">
    <property type="entry name" value="Uracil-DNA_glycosylase-like_sf"/>
</dbReference>
<dbReference type="NCBIfam" id="NF007570">
    <property type="entry name" value="PRK10201.1"/>
    <property type="match status" value="1"/>
</dbReference>
<dbReference type="PANTHER" id="PTHR12159">
    <property type="entry name" value="G/T AND G/U MISMATCH-SPECIFIC DNA GLYCOSYLASE"/>
    <property type="match status" value="1"/>
</dbReference>
<dbReference type="PANTHER" id="PTHR12159:SF9">
    <property type="entry name" value="G_T MISMATCH-SPECIFIC THYMINE DNA GLYCOSYLASE"/>
    <property type="match status" value="1"/>
</dbReference>
<dbReference type="Pfam" id="PF03167">
    <property type="entry name" value="UDG"/>
    <property type="match status" value="1"/>
</dbReference>
<dbReference type="SUPFAM" id="SSF52141">
    <property type="entry name" value="Uracil-DNA glycosylase-like"/>
    <property type="match status" value="1"/>
</dbReference>
<comment type="function">
    <text evidence="1">Excises ethenocytosine and uracil, which can arise by alkylation or deamination of cytosine, respectively, from the corresponding mispairs with guanine in ds-DNA. It is capable of hydrolyzing the carbon-nitrogen bond between the sugar-phosphate backbone of the DNA and the mispaired base. The complementary strand guanine functions in substrate recognition. Required for DNA damage lesion repair in stationary-phase cells.</text>
</comment>
<comment type="catalytic activity">
    <reaction evidence="1">
        <text>Specifically hydrolyzes mismatched double-stranded DNA and polynucleotides, releasing free uracil.</text>
        <dbReference type="EC" id="3.2.2.28"/>
    </reaction>
</comment>
<comment type="subunit">
    <text evidence="1">Binds DNA as a monomer.</text>
</comment>
<comment type="subcellular location">
    <subcellularLocation>
        <location evidence="1">Cytoplasm</location>
    </subcellularLocation>
</comment>
<comment type="similarity">
    <text evidence="1">Belongs to the uracil-DNA glycosylase (UDG) superfamily. TDG/mug family.</text>
</comment>
<gene>
    <name evidence="1" type="primary">mug</name>
    <name type="ordered locus">ECS88_3466</name>
</gene>
<accession>B7MB04</accession>
<sequence length="168" mass="18673">MVEDILAPGLRVVFCGINPGLSSAGTGFPFAHPANRFWKVIYQAGFTDRQLKPQEAQHLLDYRCGVTKLVDRPTVQANEVSKQELHAGGRKLIEKIEDYQPQALAILGKQAYEQGFSQRGAQWGKQTLTIGSTQIWVLPNPSGLSRVSLEKLVEAYRELDQALVVRGR</sequence>
<evidence type="ECO:0000255" key="1">
    <source>
        <dbReference type="HAMAP-Rule" id="MF_01956"/>
    </source>
</evidence>
<proteinExistence type="inferred from homology"/>
<keyword id="KW-0963">Cytoplasm</keyword>
<keyword id="KW-0227">DNA damage</keyword>
<keyword id="KW-0228">DNA excision</keyword>
<keyword id="KW-0234">DNA repair</keyword>
<keyword id="KW-0238">DNA-binding</keyword>
<keyword id="KW-0378">Hydrolase</keyword>
<keyword id="KW-1185">Reference proteome</keyword>
<name>MUG_ECO45</name>